<reference key="1">
    <citation type="journal article" date="2010" name="J. Proteome Res.">
        <title>Molecular diversification of peptide toxins from the tarantula Haplopelma hainanum (Ornithoctonus hainana) venom based on transcriptomic, peptidomic, and genomic analyses.</title>
        <authorList>
            <person name="Tang X."/>
            <person name="Zhang Y."/>
            <person name="Hu W."/>
            <person name="Xu D."/>
            <person name="Tao H."/>
            <person name="Yang X."/>
            <person name="Li Y."/>
            <person name="Jiang L."/>
            <person name="Liang S."/>
        </authorList>
    </citation>
    <scope>NUCLEOTIDE SEQUENCE [LARGE SCALE MRNA]</scope>
    <source>
        <tissue>Venom gland</tissue>
    </source>
</reference>
<comment type="function">
    <text evidence="1">Probable ion channel inhibitor.</text>
</comment>
<comment type="subcellular location">
    <subcellularLocation>
        <location evidence="1">Secreted</location>
    </subcellularLocation>
</comment>
<comment type="tissue specificity">
    <text>Expressed by the venom gland.</text>
</comment>
<comment type="domain">
    <text evidence="1">The presence of a 'disulfide through disulfide knot' structurally defines this protein as a knottin.</text>
</comment>
<comment type="similarity">
    <text evidence="4">Belongs to the neurotoxin 14 (magi-1) family. 01 (HNTX-16) subfamily.</text>
</comment>
<proteinExistence type="evidence at transcript level"/>
<protein>
    <recommendedName>
        <fullName>U11-theraphotoxin-Hhn1c</fullName>
        <shortName>U11-TRTX-Hhn1c</shortName>
    </recommendedName>
    <alternativeName>
        <fullName>Hainantoxin-XVI-3</fullName>
        <shortName>HNTX-XVI-3</shortName>
    </alternativeName>
</protein>
<feature type="signal peptide" evidence="2">
    <location>
        <begin position="1"/>
        <end position="21"/>
    </location>
</feature>
<feature type="propeptide" id="PRO_0000400919" evidence="1">
    <location>
        <begin position="22"/>
        <end position="74"/>
    </location>
</feature>
<feature type="chain" id="PRO_0000400920" description="U11-theraphotoxin-Hhn1c">
    <location>
        <begin position="75"/>
        <end position="116"/>
    </location>
</feature>
<feature type="region of interest" description="Disordered" evidence="3">
    <location>
        <begin position="61"/>
        <end position="83"/>
    </location>
</feature>
<feature type="disulfide bond" evidence="1">
    <location>
        <begin position="75"/>
        <end position="90"/>
    </location>
</feature>
<feature type="disulfide bond" evidence="1">
    <location>
        <begin position="82"/>
        <end position="95"/>
    </location>
</feature>
<feature type="disulfide bond" evidence="1">
    <location>
        <begin position="89"/>
        <end position="110"/>
    </location>
</feature>
<name>H16C1_CYRHA</name>
<accession>D2Y272</accession>
<organism>
    <name type="scientific">Cyriopagopus hainanus</name>
    <name type="common">Chinese bird spider</name>
    <name type="synonym">Haplopelma hainanum</name>
    <dbReference type="NCBI Taxonomy" id="209901"/>
    <lineage>
        <taxon>Eukaryota</taxon>
        <taxon>Metazoa</taxon>
        <taxon>Ecdysozoa</taxon>
        <taxon>Arthropoda</taxon>
        <taxon>Chelicerata</taxon>
        <taxon>Arachnida</taxon>
        <taxon>Araneae</taxon>
        <taxon>Mygalomorphae</taxon>
        <taxon>Theraphosidae</taxon>
        <taxon>Haplopelma</taxon>
    </lineage>
</organism>
<evidence type="ECO:0000250" key="1"/>
<evidence type="ECO:0000255" key="2"/>
<evidence type="ECO:0000256" key="3">
    <source>
        <dbReference type="SAM" id="MobiDB-lite"/>
    </source>
</evidence>
<evidence type="ECO:0000305" key="4"/>
<sequence length="116" mass="13433">MNTVRVTFLLVFVLAVSLGQADKDENRMEMQEKTEQGKSYLDFAENLLLQKLEELEAKLLEEDSEESRNSRQKRCIGEGVPCDENDPRCCSGLVCLKPTLHGIWYKSYYCYKKWSA</sequence>
<dbReference type="EMBL" id="GU292949">
    <property type="protein sequence ID" value="ADB56765.1"/>
    <property type="molecule type" value="mRNA"/>
</dbReference>
<dbReference type="ArachnoServer" id="AS001667">
    <property type="toxin name" value="U11-theraphotoxin-Hhn1c"/>
</dbReference>
<dbReference type="GO" id="GO:0005576">
    <property type="term" value="C:extracellular region"/>
    <property type="evidence" value="ECO:0007669"/>
    <property type="project" value="UniProtKB-SubCell"/>
</dbReference>
<dbReference type="GO" id="GO:0019871">
    <property type="term" value="F:sodium channel inhibitor activity"/>
    <property type="evidence" value="ECO:0007669"/>
    <property type="project" value="InterPro"/>
</dbReference>
<dbReference type="GO" id="GO:0090729">
    <property type="term" value="F:toxin activity"/>
    <property type="evidence" value="ECO:0007669"/>
    <property type="project" value="UniProtKB-KW"/>
</dbReference>
<dbReference type="InterPro" id="IPR012627">
    <property type="entry name" value="Toxin_22"/>
</dbReference>
<dbReference type="Pfam" id="PF08092">
    <property type="entry name" value="Toxin_22"/>
    <property type="match status" value="1"/>
</dbReference>
<keyword id="KW-1015">Disulfide bond</keyword>
<keyword id="KW-0872">Ion channel impairing toxin</keyword>
<keyword id="KW-0960">Knottin</keyword>
<keyword id="KW-0964">Secreted</keyword>
<keyword id="KW-0732">Signal</keyword>
<keyword id="KW-0800">Toxin</keyword>